<proteinExistence type="inferred from homology"/>
<dbReference type="EMBL" id="CP000477">
    <property type="protein sequence ID" value="ABK14272.1"/>
    <property type="molecule type" value="Genomic_DNA"/>
</dbReference>
<dbReference type="RefSeq" id="WP_011695670.1">
    <property type="nucleotide sequence ID" value="NC_008553.1"/>
</dbReference>
<dbReference type="SMR" id="A0B6E8"/>
<dbReference type="STRING" id="349307.Mthe_0481"/>
<dbReference type="GeneID" id="4463098"/>
<dbReference type="KEGG" id="mtp:Mthe_0481"/>
<dbReference type="HOGENOM" id="CLU_046483_4_0_2"/>
<dbReference type="OrthoDB" id="52677at2157"/>
<dbReference type="Proteomes" id="UP000000674">
    <property type="component" value="Chromosome"/>
</dbReference>
<dbReference type="GO" id="GO:0022627">
    <property type="term" value="C:cytosolic small ribosomal subunit"/>
    <property type="evidence" value="ECO:0007669"/>
    <property type="project" value="TreeGrafter"/>
</dbReference>
<dbReference type="GO" id="GO:0003723">
    <property type="term" value="F:RNA binding"/>
    <property type="evidence" value="ECO:0007669"/>
    <property type="project" value="TreeGrafter"/>
</dbReference>
<dbReference type="GO" id="GO:0003735">
    <property type="term" value="F:structural constituent of ribosome"/>
    <property type="evidence" value="ECO:0007669"/>
    <property type="project" value="InterPro"/>
</dbReference>
<dbReference type="GO" id="GO:0000462">
    <property type="term" value="P:maturation of SSU-rRNA from tricistronic rRNA transcript (SSU-rRNA, 5.8S rRNA, LSU-rRNA)"/>
    <property type="evidence" value="ECO:0007669"/>
    <property type="project" value="TreeGrafter"/>
</dbReference>
<dbReference type="GO" id="GO:0006412">
    <property type="term" value="P:translation"/>
    <property type="evidence" value="ECO:0007669"/>
    <property type="project" value="UniProtKB-UniRule"/>
</dbReference>
<dbReference type="FunFam" id="3.30.230.10:FF:000051">
    <property type="entry name" value="30S ribosomal protein S9"/>
    <property type="match status" value="1"/>
</dbReference>
<dbReference type="Gene3D" id="3.30.230.10">
    <property type="match status" value="1"/>
</dbReference>
<dbReference type="HAMAP" id="MF_00532_A">
    <property type="entry name" value="Ribosomal_uS9_A"/>
    <property type="match status" value="1"/>
</dbReference>
<dbReference type="InterPro" id="IPR020568">
    <property type="entry name" value="Ribosomal_Su5_D2-typ_SF"/>
</dbReference>
<dbReference type="InterPro" id="IPR000754">
    <property type="entry name" value="Ribosomal_uS9"/>
</dbReference>
<dbReference type="InterPro" id="IPR019958">
    <property type="entry name" value="Ribosomal_uS9_archaeal"/>
</dbReference>
<dbReference type="InterPro" id="IPR020574">
    <property type="entry name" value="Ribosomal_uS9_CS"/>
</dbReference>
<dbReference type="InterPro" id="IPR014721">
    <property type="entry name" value="Ribsml_uS5_D2-typ_fold_subgr"/>
</dbReference>
<dbReference type="NCBIfam" id="NF001749">
    <property type="entry name" value="PRK00474.1"/>
    <property type="match status" value="1"/>
</dbReference>
<dbReference type="NCBIfam" id="TIGR03627">
    <property type="entry name" value="uS9_arch"/>
    <property type="match status" value="1"/>
</dbReference>
<dbReference type="PANTHER" id="PTHR21569:SF16">
    <property type="entry name" value="RIBOSOMAL PROTEIN S16"/>
    <property type="match status" value="1"/>
</dbReference>
<dbReference type="PANTHER" id="PTHR21569">
    <property type="entry name" value="RIBOSOMAL PROTEIN S9"/>
    <property type="match status" value="1"/>
</dbReference>
<dbReference type="Pfam" id="PF00380">
    <property type="entry name" value="Ribosomal_S9"/>
    <property type="match status" value="1"/>
</dbReference>
<dbReference type="SUPFAM" id="SSF54211">
    <property type="entry name" value="Ribosomal protein S5 domain 2-like"/>
    <property type="match status" value="1"/>
</dbReference>
<dbReference type="PROSITE" id="PS00360">
    <property type="entry name" value="RIBOSOMAL_S9"/>
    <property type="match status" value="1"/>
</dbReference>
<organism>
    <name type="scientific">Methanothrix thermoacetophila (strain DSM 6194 / JCM 14653 / NBRC 101360 / PT)</name>
    <name type="common">Methanosaeta thermophila</name>
    <dbReference type="NCBI Taxonomy" id="349307"/>
    <lineage>
        <taxon>Archaea</taxon>
        <taxon>Methanobacteriati</taxon>
        <taxon>Methanobacteriota</taxon>
        <taxon>Stenosarchaea group</taxon>
        <taxon>Methanomicrobia</taxon>
        <taxon>Methanotrichales</taxon>
        <taxon>Methanotrichaceae</taxon>
        <taxon>Methanothrix</taxon>
    </lineage>
</organism>
<keyword id="KW-1185">Reference proteome</keyword>
<keyword id="KW-0687">Ribonucleoprotein</keyword>
<keyword id="KW-0689">Ribosomal protein</keyword>
<protein>
    <recommendedName>
        <fullName evidence="1">Small ribosomal subunit protein uS9</fullName>
    </recommendedName>
    <alternativeName>
        <fullName evidence="2">30S ribosomal protein S9</fullName>
    </alternativeName>
</protein>
<sequence>MKVVNSSGKKKTAIARATFKEGKGRIRINNVPLEIIEPALARMKMMEPVIMAAEAFSSVDVDVSVMGGGVMGQADAVRTALARGILEWTGDAALKEAYAEYDRNLLVSDHRQKEKKKFGGLGARAKYQKSYR</sequence>
<evidence type="ECO:0000255" key="1">
    <source>
        <dbReference type="HAMAP-Rule" id="MF_00532"/>
    </source>
</evidence>
<evidence type="ECO:0000305" key="2"/>
<feature type="chain" id="PRO_1000061009" description="Small ribosomal subunit protein uS9">
    <location>
        <begin position="1"/>
        <end position="132"/>
    </location>
</feature>
<reference key="1">
    <citation type="submission" date="2006-10" db="EMBL/GenBank/DDBJ databases">
        <title>Complete sequence of Methanosaeta thermophila PT.</title>
        <authorList>
            <consortium name="US DOE Joint Genome Institute"/>
            <person name="Copeland A."/>
            <person name="Lucas S."/>
            <person name="Lapidus A."/>
            <person name="Barry K."/>
            <person name="Detter J.C."/>
            <person name="Glavina del Rio T."/>
            <person name="Hammon N."/>
            <person name="Israni S."/>
            <person name="Pitluck S."/>
            <person name="Chain P."/>
            <person name="Malfatti S."/>
            <person name="Shin M."/>
            <person name="Vergez L."/>
            <person name="Schmutz J."/>
            <person name="Larimer F."/>
            <person name="Land M."/>
            <person name="Hauser L."/>
            <person name="Kyrpides N."/>
            <person name="Kim E."/>
            <person name="Smith K.S."/>
            <person name="Ingram-Smith C."/>
            <person name="Richardson P."/>
        </authorList>
    </citation>
    <scope>NUCLEOTIDE SEQUENCE [LARGE SCALE GENOMIC DNA]</scope>
    <source>
        <strain>DSM 6194 / JCM 14653 / NBRC 101360 / PT</strain>
    </source>
</reference>
<comment type="similarity">
    <text evidence="1">Belongs to the universal ribosomal protein uS9 family.</text>
</comment>
<accession>A0B6E8</accession>
<gene>
    <name evidence="1" type="primary">rps9</name>
    <name type="ordered locus">Mthe_0481</name>
</gene>
<name>RS9_METTP</name>